<proteinExistence type="inferred from homology"/>
<accession>Q3YW12</accession>
<reference key="1">
    <citation type="journal article" date="2005" name="Nucleic Acids Res.">
        <title>Genome dynamics and diversity of Shigella species, the etiologic agents of bacillary dysentery.</title>
        <authorList>
            <person name="Yang F."/>
            <person name="Yang J."/>
            <person name="Zhang X."/>
            <person name="Chen L."/>
            <person name="Jiang Y."/>
            <person name="Yan Y."/>
            <person name="Tang X."/>
            <person name="Wang J."/>
            <person name="Xiong Z."/>
            <person name="Dong J."/>
            <person name="Xue Y."/>
            <person name="Zhu Y."/>
            <person name="Xu X."/>
            <person name="Sun L."/>
            <person name="Chen S."/>
            <person name="Nie H."/>
            <person name="Peng J."/>
            <person name="Xu J."/>
            <person name="Wang Y."/>
            <person name="Yuan Z."/>
            <person name="Wen Y."/>
            <person name="Yao Z."/>
            <person name="Shen Y."/>
            <person name="Qiang B."/>
            <person name="Hou Y."/>
            <person name="Yu J."/>
            <person name="Jin Q."/>
        </authorList>
    </citation>
    <scope>NUCLEOTIDE SEQUENCE [LARGE SCALE GENOMIC DNA]</scope>
    <source>
        <strain>Ss046</strain>
    </source>
</reference>
<dbReference type="EC" id="2.7.7.6" evidence="1"/>
<dbReference type="EMBL" id="CP000038">
    <property type="protein sequence ID" value="AAZ90300.1"/>
    <property type="molecule type" value="Genomic_DNA"/>
</dbReference>
<dbReference type="RefSeq" id="WP_000135058.1">
    <property type="nucleotide sequence ID" value="NC_007384.1"/>
</dbReference>
<dbReference type="SMR" id="Q3YW12"/>
<dbReference type="GeneID" id="98390719"/>
<dbReference type="KEGG" id="ssn:SSON_3756"/>
<dbReference type="HOGENOM" id="CLU_125406_5_3_6"/>
<dbReference type="Proteomes" id="UP000002529">
    <property type="component" value="Chromosome"/>
</dbReference>
<dbReference type="GO" id="GO:0000428">
    <property type="term" value="C:DNA-directed RNA polymerase complex"/>
    <property type="evidence" value="ECO:0007669"/>
    <property type="project" value="UniProtKB-KW"/>
</dbReference>
<dbReference type="GO" id="GO:0003677">
    <property type="term" value="F:DNA binding"/>
    <property type="evidence" value="ECO:0007669"/>
    <property type="project" value="UniProtKB-UniRule"/>
</dbReference>
<dbReference type="GO" id="GO:0003899">
    <property type="term" value="F:DNA-directed RNA polymerase activity"/>
    <property type="evidence" value="ECO:0007669"/>
    <property type="project" value="UniProtKB-UniRule"/>
</dbReference>
<dbReference type="GO" id="GO:0006351">
    <property type="term" value="P:DNA-templated transcription"/>
    <property type="evidence" value="ECO:0007669"/>
    <property type="project" value="UniProtKB-UniRule"/>
</dbReference>
<dbReference type="FunFam" id="3.90.940.10:FF:000001">
    <property type="entry name" value="DNA-directed RNA polymerase subunit omega"/>
    <property type="match status" value="1"/>
</dbReference>
<dbReference type="Gene3D" id="3.90.940.10">
    <property type="match status" value="1"/>
</dbReference>
<dbReference type="HAMAP" id="MF_00366">
    <property type="entry name" value="RNApol_bact_RpoZ"/>
    <property type="match status" value="1"/>
</dbReference>
<dbReference type="InterPro" id="IPR003716">
    <property type="entry name" value="DNA-dir_RNA_pol_omega"/>
</dbReference>
<dbReference type="InterPro" id="IPR006110">
    <property type="entry name" value="Pol_omega/Rpo6/RPB6"/>
</dbReference>
<dbReference type="InterPro" id="IPR036161">
    <property type="entry name" value="RPB6/omega-like_sf"/>
</dbReference>
<dbReference type="NCBIfam" id="TIGR00690">
    <property type="entry name" value="rpoZ"/>
    <property type="match status" value="1"/>
</dbReference>
<dbReference type="PANTHER" id="PTHR34476">
    <property type="entry name" value="DNA-DIRECTED RNA POLYMERASE SUBUNIT OMEGA"/>
    <property type="match status" value="1"/>
</dbReference>
<dbReference type="PANTHER" id="PTHR34476:SF1">
    <property type="entry name" value="DNA-DIRECTED RNA POLYMERASE SUBUNIT OMEGA"/>
    <property type="match status" value="1"/>
</dbReference>
<dbReference type="Pfam" id="PF01192">
    <property type="entry name" value="RNA_pol_Rpb6"/>
    <property type="match status" value="1"/>
</dbReference>
<dbReference type="SMART" id="SM01409">
    <property type="entry name" value="RNA_pol_Rpb6"/>
    <property type="match status" value="1"/>
</dbReference>
<dbReference type="SUPFAM" id="SSF63562">
    <property type="entry name" value="RPB6/omega subunit-like"/>
    <property type="match status" value="1"/>
</dbReference>
<protein>
    <recommendedName>
        <fullName evidence="1">DNA-directed RNA polymerase subunit omega</fullName>
        <shortName evidence="1">RNAP omega subunit</shortName>
        <ecNumber evidence="1">2.7.7.6</ecNumber>
    </recommendedName>
    <alternativeName>
        <fullName evidence="1">RNA polymerase omega subunit</fullName>
    </alternativeName>
    <alternativeName>
        <fullName evidence="1">Transcriptase subunit omega</fullName>
    </alternativeName>
</protein>
<organism>
    <name type="scientific">Shigella sonnei (strain Ss046)</name>
    <dbReference type="NCBI Taxonomy" id="300269"/>
    <lineage>
        <taxon>Bacteria</taxon>
        <taxon>Pseudomonadati</taxon>
        <taxon>Pseudomonadota</taxon>
        <taxon>Gammaproteobacteria</taxon>
        <taxon>Enterobacterales</taxon>
        <taxon>Enterobacteriaceae</taxon>
        <taxon>Shigella</taxon>
    </lineage>
</organism>
<feature type="chain" id="PRO_0000237506" description="DNA-directed RNA polymerase subunit omega">
    <location>
        <begin position="1"/>
        <end position="91"/>
    </location>
</feature>
<sequence length="91" mass="10237">MARVTVQDAVEKIGNRFDLVLVAARRARQMQVGGKDPLVPEENDKTTVIALREIEEGLINNQILDVRERQEQQEQEAAELQAVTAIAEGRR</sequence>
<keyword id="KW-0240">DNA-directed RNA polymerase</keyword>
<keyword id="KW-0548">Nucleotidyltransferase</keyword>
<keyword id="KW-1185">Reference proteome</keyword>
<keyword id="KW-0804">Transcription</keyword>
<keyword id="KW-0808">Transferase</keyword>
<gene>
    <name evidence="1" type="primary">rpoZ</name>
    <name type="ordered locus">SSON_3756</name>
</gene>
<name>RPOZ_SHISS</name>
<evidence type="ECO:0000255" key="1">
    <source>
        <dbReference type="HAMAP-Rule" id="MF_00366"/>
    </source>
</evidence>
<comment type="function">
    <text evidence="1">Promotes RNA polymerase assembly. Latches the N- and C-terminal regions of the beta' subunit thereby facilitating its interaction with the beta and alpha subunits.</text>
</comment>
<comment type="catalytic activity">
    <reaction evidence="1">
        <text>RNA(n) + a ribonucleoside 5'-triphosphate = RNA(n+1) + diphosphate</text>
        <dbReference type="Rhea" id="RHEA:21248"/>
        <dbReference type="Rhea" id="RHEA-COMP:14527"/>
        <dbReference type="Rhea" id="RHEA-COMP:17342"/>
        <dbReference type="ChEBI" id="CHEBI:33019"/>
        <dbReference type="ChEBI" id="CHEBI:61557"/>
        <dbReference type="ChEBI" id="CHEBI:140395"/>
        <dbReference type="EC" id="2.7.7.6"/>
    </reaction>
</comment>
<comment type="subunit">
    <text evidence="1">The RNAP catalytic core consists of 2 alpha, 1 beta, 1 beta' and 1 omega subunit. When a sigma factor is associated with the core the holoenzyme is formed, which can initiate transcription.</text>
</comment>
<comment type="similarity">
    <text evidence="1">Belongs to the RNA polymerase subunit omega family.</text>
</comment>